<name>APOC2_MIRAN</name>
<evidence type="ECO:0000250" key="1">
    <source>
        <dbReference type="UniProtKB" id="P02655"/>
    </source>
</evidence>
<evidence type="ECO:0000255" key="2"/>
<evidence type="ECO:0000305" key="3"/>
<gene>
    <name type="primary">APOC2</name>
</gene>
<proteinExistence type="inferred from homology"/>
<reference key="1">
    <citation type="submission" date="2017-11" db="EMBL/GenBank/DDBJ databases">
        <authorList>
            <person name="Johnson J."/>
            <person name="Muren E."/>
            <person name="Swofford R."/>
            <person name="Turner-Maier J."/>
            <person name="Marinescu V.D."/>
            <person name="Genereux D.P."/>
            <person name="Alfoldi J."/>
            <person name="Birren B."/>
            <person name="Karlsson E.K."/>
            <person name="Lindblad-Toh K."/>
        </authorList>
    </citation>
    <scope>NUCLEOTIDE SEQUENCE [LARGE SCALE GENOMIC DNA]</scope>
</reference>
<reference key="2">
    <citation type="unpublished observations" date="2019-09">
        <authorList>
            <person name="Puppione D.L."/>
        </authorList>
    </citation>
    <scope>IDENTIFICATION</scope>
</reference>
<comment type="function">
    <text evidence="1">Component of chylomicrons, very low-density lipoproteins (VLDL), low-density lipoproteins (LDL), and high-density lipoproteins (HDL) in plasma. Plays an important role in lipoprotein metabolism as an activator of lipoprotein lipase. Both proapolipoprotein C-II and apolipoprotein C-II can activate lipoprotein lipase.</text>
</comment>
<comment type="subcellular location">
    <subcellularLocation>
        <location evidence="1">Secreted</location>
    </subcellularLocation>
</comment>
<comment type="PTM">
    <text evidence="1">Proapolipoprotein C-II is synthesized as a sialic acid containing glycoprotein which is subsequently desialylated prior to its proteolytic processing.</text>
</comment>
<comment type="PTM">
    <text evidence="1">Proapolipoprotein C-II, the major form found in plasma undergoes proteolytic cleavage of its N-terminal hexapeptide to generate apolipoprotein C-II, which occurs as the minor form in plasma.</text>
</comment>
<comment type="similarity">
    <text evidence="3">Belongs to the apolipoprotein C2 family.</text>
</comment>
<protein>
    <recommendedName>
        <fullName>Apolipoprotein C-II</fullName>
        <shortName>Apo-CII</shortName>
        <shortName>ApoC-II</shortName>
    </recommendedName>
    <alternativeName>
        <fullName>Apolipoprotein C2</fullName>
    </alternativeName>
    <component>
        <recommendedName>
            <fullName>Proapolipoprotein C-II</fullName>
            <shortName>ProapoC-II</shortName>
        </recommendedName>
    </component>
</protein>
<dbReference type="EMBL" id="PITE01041604">
    <property type="status" value="NOT_ANNOTATED_CDS"/>
    <property type="molecule type" value="Genomic_DNA"/>
</dbReference>
<dbReference type="RefSeq" id="XP_045746359.1">
    <property type="nucleotide sequence ID" value="XM_045890403.2"/>
</dbReference>
<dbReference type="SMR" id="P0DTQ5"/>
<dbReference type="GeneID" id="123855037"/>
<dbReference type="GO" id="GO:0042627">
    <property type="term" value="C:chylomicron"/>
    <property type="evidence" value="ECO:0007669"/>
    <property type="project" value="UniProtKB-KW"/>
</dbReference>
<dbReference type="GO" id="GO:0034364">
    <property type="term" value="C:high-density lipoprotein particle"/>
    <property type="evidence" value="ECO:0007669"/>
    <property type="project" value="UniProtKB-KW"/>
</dbReference>
<dbReference type="GO" id="GO:0034362">
    <property type="term" value="C:low-density lipoprotein particle"/>
    <property type="evidence" value="ECO:0007669"/>
    <property type="project" value="UniProtKB-KW"/>
</dbReference>
<dbReference type="GO" id="GO:0034361">
    <property type="term" value="C:very-low-density lipoprotein particle"/>
    <property type="evidence" value="ECO:0007669"/>
    <property type="project" value="UniProtKB-KW"/>
</dbReference>
<dbReference type="GO" id="GO:0016004">
    <property type="term" value="F:phospholipase activator activity"/>
    <property type="evidence" value="ECO:0007669"/>
    <property type="project" value="TreeGrafter"/>
</dbReference>
<dbReference type="GO" id="GO:0043274">
    <property type="term" value="F:phospholipase binding"/>
    <property type="evidence" value="ECO:0007669"/>
    <property type="project" value="TreeGrafter"/>
</dbReference>
<dbReference type="GO" id="GO:0016042">
    <property type="term" value="P:lipid catabolic process"/>
    <property type="evidence" value="ECO:0007669"/>
    <property type="project" value="UniProtKB-KW"/>
</dbReference>
<dbReference type="GO" id="GO:0006869">
    <property type="term" value="P:lipid transport"/>
    <property type="evidence" value="ECO:0007669"/>
    <property type="project" value="UniProtKB-KW"/>
</dbReference>
<dbReference type="GO" id="GO:0060697">
    <property type="term" value="P:positive regulation of phospholipid catabolic process"/>
    <property type="evidence" value="ECO:0007669"/>
    <property type="project" value="TreeGrafter"/>
</dbReference>
<dbReference type="FunFam" id="1.10.1440.10:FF:000001">
    <property type="entry name" value="Apolipoprotein C-II"/>
    <property type="match status" value="1"/>
</dbReference>
<dbReference type="Gene3D" id="1.10.1440.10">
    <property type="entry name" value="Apolipoprotein C-II"/>
    <property type="match status" value="1"/>
</dbReference>
<dbReference type="InterPro" id="IPR008019">
    <property type="entry name" value="Apo-CII"/>
</dbReference>
<dbReference type="InterPro" id="IPR023121">
    <property type="entry name" value="ApoC-II_dom_sf"/>
</dbReference>
<dbReference type="PANTHER" id="PTHR16566">
    <property type="entry name" value="APOLIPOPROTEIN C-II"/>
    <property type="match status" value="1"/>
</dbReference>
<dbReference type="PANTHER" id="PTHR16566:SF0">
    <property type="entry name" value="APOLIPOPROTEIN C-II"/>
    <property type="match status" value="1"/>
</dbReference>
<dbReference type="Pfam" id="PF05355">
    <property type="entry name" value="Apo-CII"/>
    <property type="match status" value="1"/>
</dbReference>
<sequence>MGIRYLLVLVLVLLVLGCEVQGAHMPQQDEATSPSLFTQMQESFYGYWGIAKSAAQGLYEKTYLTTVDEKIREIYNKSTAAVSTYAGIFTDQLLSMLKGDQ</sequence>
<organism>
    <name type="scientific">Mirounga angustirostris</name>
    <name type="common">Northern elephant seal</name>
    <name type="synonym">Macrorhinus angustirostris</name>
    <dbReference type="NCBI Taxonomy" id="9716"/>
    <lineage>
        <taxon>Eukaryota</taxon>
        <taxon>Metazoa</taxon>
        <taxon>Chordata</taxon>
        <taxon>Craniata</taxon>
        <taxon>Vertebrata</taxon>
        <taxon>Euteleostomi</taxon>
        <taxon>Mammalia</taxon>
        <taxon>Eutheria</taxon>
        <taxon>Laurasiatheria</taxon>
        <taxon>Carnivora</taxon>
        <taxon>Caniformia</taxon>
        <taxon>Pinnipedia</taxon>
        <taxon>Phocidae</taxon>
        <taxon>Monachinae</taxon>
        <taxon>Miroungini</taxon>
        <taxon>Mirounga</taxon>
    </lineage>
</organism>
<keyword id="KW-0162">Chylomicron</keyword>
<keyword id="KW-0325">Glycoprotein</keyword>
<keyword id="KW-0345">HDL</keyword>
<keyword id="KW-0427">LDL</keyword>
<keyword id="KW-0442">Lipid degradation</keyword>
<keyword id="KW-0443">Lipid metabolism</keyword>
<keyword id="KW-0445">Lipid transport</keyword>
<keyword id="KW-0449">Lipoprotein</keyword>
<keyword id="KW-0964">Secreted</keyword>
<keyword id="KW-0730">Sialic acid</keyword>
<keyword id="KW-0732">Signal</keyword>
<keyword id="KW-0813">Transport</keyword>
<keyword id="KW-0850">VLDL</keyword>
<accession>P0DTQ5</accession>
<feature type="signal peptide" evidence="2">
    <location>
        <begin position="1"/>
        <end position="22"/>
    </location>
</feature>
<feature type="chain" id="PRO_0000448500" description="Proapolipoprotein C-II">
    <location>
        <begin position="23"/>
        <end position="101"/>
    </location>
</feature>
<feature type="chain" id="PRO_0000448501" description="Apolipoprotein C-II" evidence="1">
    <location>
        <begin position="29"/>
        <end position="101"/>
    </location>
</feature>
<feature type="region of interest" description="Lipid binding" evidence="1">
    <location>
        <begin position="66"/>
        <end position="74"/>
    </location>
</feature>
<feature type="region of interest" description="Lipoprotein lipase cofactor" evidence="1">
    <location>
        <begin position="78"/>
        <end position="101"/>
    </location>
</feature>